<accession>Q5RB69</accession>
<evidence type="ECO:0000250" key="1">
    <source>
        <dbReference type="UniProtKB" id="Q9H6F5"/>
    </source>
</evidence>
<evidence type="ECO:0000250" key="2">
    <source>
        <dbReference type="UniProtKB" id="Q9JJ89"/>
    </source>
</evidence>
<evidence type="ECO:0000255" key="3"/>
<evidence type="ECO:0000256" key="4">
    <source>
        <dbReference type="SAM" id="MobiDB-lite"/>
    </source>
</evidence>
<sequence>MDTPLRRSRRLGGLRPECPESLTSVSRTRRALVELESNPEETREPGSPPSVQRAGLGSPERPPKTSPGSPRLQQGSGLESPQGQPEPGAGSPQRQQDLHLESPQRQPEYSPESPRCQPKPSEEVPKCSQDQGVLASELAQSKEELTPGAPQHQLPPVPGSPEPYPGQQAPGPEPSQPLLELTPRAPGSPRGQHEPSKPPPAGETVTGGFGAKKRKGSSSLAPASKKLNKEELPVIPKGKPKSGRVWKDRSKKRFSQMLQDKPLRTSWQRKMKERQERKLAKDFARHLEEEKERRRQEKKQRRAENLKRRLENERKAEVVQVIRNPAKLKRAKKKQLRSIEKRDTLALLQKQPPQRPAAKI</sequence>
<keyword id="KW-0158">Chromosome</keyword>
<keyword id="KW-0164">Citrullination</keyword>
<keyword id="KW-0175">Coiled coil</keyword>
<keyword id="KW-0539">Nucleus</keyword>
<keyword id="KW-0597">Phosphoprotein</keyword>
<keyword id="KW-1185">Reference proteome</keyword>
<feature type="chain" id="PRO_0000286094" description="Coiled-coil domain-containing protein 86">
    <location>
        <begin position="1"/>
        <end position="360"/>
    </location>
</feature>
<feature type="region of interest" description="Disordered" evidence="4">
    <location>
        <begin position="1"/>
        <end position="314"/>
    </location>
</feature>
<feature type="region of interest" description="Disordered" evidence="4">
    <location>
        <begin position="328"/>
        <end position="360"/>
    </location>
</feature>
<feature type="coiled-coil region" evidence="3">
    <location>
        <begin position="272"/>
        <end position="323"/>
    </location>
</feature>
<feature type="compositionally biased region" description="Basic residues" evidence="4">
    <location>
        <begin position="1"/>
        <end position="12"/>
    </location>
</feature>
<feature type="compositionally biased region" description="Polar residues" evidence="4">
    <location>
        <begin position="66"/>
        <end position="83"/>
    </location>
</feature>
<feature type="compositionally biased region" description="Pro residues" evidence="4">
    <location>
        <begin position="153"/>
        <end position="164"/>
    </location>
</feature>
<feature type="compositionally biased region" description="Basic residues" evidence="4">
    <location>
        <begin position="238"/>
        <end position="254"/>
    </location>
</feature>
<feature type="compositionally biased region" description="Basic and acidic residues" evidence="4">
    <location>
        <begin position="273"/>
        <end position="295"/>
    </location>
</feature>
<feature type="compositionally biased region" description="Basic and acidic residues" evidence="4">
    <location>
        <begin position="302"/>
        <end position="314"/>
    </location>
</feature>
<feature type="modified residue" description="Phosphoserine" evidence="1">
    <location>
        <position position="21"/>
    </location>
</feature>
<feature type="modified residue" description="Phosphoserine" evidence="1">
    <location>
        <position position="24"/>
    </location>
</feature>
<feature type="modified residue" description="Phosphoserine" evidence="1">
    <location>
        <position position="47"/>
    </location>
</feature>
<feature type="modified residue" description="Phosphoserine" evidence="1">
    <location>
        <position position="50"/>
    </location>
</feature>
<feature type="modified residue" description="Phosphoserine" evidence="1">
    <location>
        <position position="58"/>
    </location>
</feature>
<feature type="modified residue" description="Phosphothreonine" evidence="1">
    <location>
        <position position="65"/>
    </location>
</feature>
<feature type="modified residue" description="Phosphoserine" evidence="1">
    <location>
        <position position="66"/>
    </location>
</feature>
<feature type="modified residue" description="Phosphoserine" evidence="1">
    <location>
        <position position="69"/>
    </location>
</feature>
<feature type="modified residue" description="Phosphoserine" evidence="1">
    <location>
        <position position="80"/>
    </location>
</feature>
<feature type="modified residue" description="Phosphoserine" evidence="1">
    <location>
        <position position="91"/>
    </location>
</feature>
<feature type="modified residue" description="Phosphoserine" evidence="1">
    <location>
        <position position="102"/>
    </location>
</feature>
<feature type="modified residue" description="Phosphoserine" evidence="1">
    <location>
        <position position="110"/>
    </location>
</feature>
<feature type="modified residue" description="Phosphoserine" evidence="1">
    <location>
        <position position="113"/>
    </location>
</feature>
<feature type="modified residue" description="Phosphoserine" evidence="1">
    <location>
        <position position="128"/>
    </location>
</feature>
<feature type="modified residue" description="Phosphoserine" evidence="2">
    <location>
        <position position="188"/>
    </location>
</feature>
<feature type="modified residue" description="Phosphoserine" evidence="1">
    <location>
        <position position="217"/>
    </location>
</feature>
<feature type="modified residue" description="Phosphoserine" evidence="2">
    <location>
        <position position="218"/>
    </location>
</feature>
<feature type="modified residue" description="Citrulline" evidence="2">
    <location>
        <position position="342"/>
    </location>
</feature>
<dbReference type="EMBL" id="CR858785">
    <property type="protein sequence ID" value="CAH90991.1"/>
    <property type="molecule type" value="mRNA"/>
</dbReference>
<dbReference type="RefSeq" id="NP_001127360.1">
    <property type="nucleotide sequence ID" value="NM_001133888.1"/>
</dbReference>
<dbReference type="SMR" id="Q5RB69"/>
<dbReference type="FunCoup" id="Q5RB69">
    <property type="interactions" value="1604"/>
</dbReference>
<dbReference type="STRING" id="9601.ENSPPYP00000003695"/>
<dbReference type="GeneID" id="100174425"/>
<dbReference type="KEGG" id="pon:100174425"/>
<dbReference type="CTD" id="79080"/>
<dbReference type="eggNOG" id="KOG4538">
    <property type="taxonomic scope" value="Eukaryota"/>
</dbReference>
<dbReference type="InParanoid" id="Q5RB69"/>
<dbReference type="OrthoDB" id="277961at2759"/>
<dbReference type="Proteomes" id="UP000001595">
    <property type="component" value="Unplaced"/>
</dbReference>
<dbReference type="GO" id="GO:0005730">
    <property type="term" value="C:nucleolus"/>
    <property type="evidence" value="ECO:0007669"/>
    <property type="project" value="TreeGrafter"/>
</dbReference>
<dbReference type="InterPro" id="IPR026570">
    <property type="entry name" value="CCDC86"/>
</dbReference>
<dbReference type="InterPro" id="IPR005579">
    <property type="entry name" value="Cgr1-like"/>
</dbReference>
<dbReference type="PANTHER" id="PTHR13557">
    <property type="entry name" value="COILED-COIL DOMAIN-CONTAINING PROTEIN 86"/>
    <property type="match status" value="1"/>
</dbReference>
<dbReference type="PANTHER" id="PTHR13557:SF1">
    <property type="entry name" value="COILED-COIL DOMAIN-CONTAINING PROTEIN 86"/>
    <property type="match status" value="1"/>
</dbReference>
<dbReference type="Pfam" id="PF03879">
    <property type="entry name" value="Cgr1"/>
    <property type="match status" value="1"/>
</dbReference>
<name>CCD86_PONAB</name>
<organism>
    <name type="scientific">Pongo abelii</name>
    <name type="common">Sumatran orangutan</name>
    <name type="synonym">Pongo pygmaeus abelii</name>
    <dbReference type="NCBI Taxonomy" id="9601"/>
    <lineage>
        <taxon>Eukaryota</taxon>
        <taxon>Metazoa</taxon>
        <taxon>Chordata</taxon>
        <taxon>Craniata</taxon>
        <taxon>Vertebrata</taxon>
        <taxon>Euteleostomi</taxon>
        <taxon>Mammalia</taxon>
        <taxon>Eutheria</taxon>
        <taxon>Euarchontoglires</taxon>
        <taxon>Primates</taxon>
        <taxon>Haplorrhini</taxon>
        <taxon>Catarrhini</taxon>
        <taxon>Hominidae</taxon>
        <taxon>Pongo</taxon>
    </lineage>
</organism>
<comment type="function">
    <text evidence="1">Required for proper chromosome segregation during mitosis and error-free mitotic progression.</text>
</comment>
<comment type="subcellular location">
    <subcellularLocation>
        <location evidence="1">Nucleus</location>
    </subcellularLocation>
    <subcellularLocation>
        <location evidence="1">Chromosome</location>
    </subcellularLocation>
    <subcellularLocation>
        <location evidence="1">Nucleus</location>
        <location evidence="1">Nucleolus</location>
    </subcellularLocation>
    <text evidence="1">Localized to the nucleolus during the interphase and localized to the perichromosomal layer (also known as chromosome periphery) during mitosis; is particularly enriched at the perichromosomal layer during anaphase. Colocalizes with MKI67 during interphase and mitotic exit.</text>
</comment>
<comment type="PTM">
    <text evidence="2">Citrullinated by PADI4.</text>
</comment>
<gene>
    <name evidence="1" type="primary">CCDC86</name>
</gene>
<reference key="1">
    <citation type="submission" date="2004-11" db="EMBL/GenBank/DDBJ databases">
        <authorList>
            <consortium name="The German cDNA consortium"/>
        </authorList>
    </citation>
    <scope>NUCLEOTIDE SEQUENCE [LARGE SCALE MRNA]</scope>
    <source>
        <tissue>Kidney</tissue>
    </source>
</reference>
<protein>
    <recommendedName>
        <fullName evidence="1">Coiled-coil domain-containing protein 86</fullName>
    </recommendedName>
</protein>
<proteinExistence type="evidence at transcript level"/>